<protein>
    <recommendedName>
        <fullName evidence="1">Phospho-N-acetylmuramoyl-pentapeptide-transferase</fullName>
        <ecNumber evidence="1">2.7.8.13</ecNumber>
    </recommendedName>
    <alternativeName>
        <fullName evidence="1">UDP-MurNAc-pentapeptide phosphotransferase</fullName>
    </alternativeName>
</protein>
<name>MRAY_FRATW</name>
<proteinExistence type="inferred from homology"/>
<evidence type="ECO:0000255" key="1">
    <source>
        <dbReference type="HAMAP-Rule" id="MF_00038"/>
    </source>
</evidence>
<dbReference type="EC" id="2.7.8.13" evidence="1"/>
<dbReference type="EMBL" id="CP000608">
    <property type="protein sequence ID" value="ABO47320.1"/>
    <property type="molecule type" value="Genomic_DNA"/>
</dbReference>
<dbReference type="RefSeq" id="WP_003026957.1">
    <property type="nucleotide sequence ID" value="NC_009257.1"/>
</dbReference>
<dbReference type="SMR" id="A4IZH0"/>
<dbReference type="KEGG" id="ftw:FTW_1620"/>
<dbReference type="HOGENOM" id="CLU_023982_0_0_6"/>
<dbReference type="UniPathway" id="UPA00219"/>
<dbReference type="GO" id="GO:0005886">
    <property type="term" value="C:plasma membrane"/>
    <property type="evidence" value="ECO:0007669"/>
    <property type="project" value="UniProtKB-SubCell"/>
</dbReference>
<dbReference type="GO" id="GO:0046872">
    <property type="term" value="F:metal ion binding"/>
    <property type="evidence" value="ECO:0007669"/>
    <property type="project" value="UniProtKB-KW"/>
</dbReference>
<dbReference type="GO" id="GO:0008963">
    <property type="term" value="F:phospho-N-acetylmuramoyl-pentapeptide-transferase activity"/>
    <property type="evidence" value="ECO:0007669"/>
    <property type="project" value="UniProtKB-UniRule"/>
</dbReference>
<dbReference type="GO" id="GO:0051992">
    <property type="term" value="F:UDP-N-acetylmuramoyl-L-alanyl-D-glutamyl-meso-2,6-diaminopimelyl-D-alanyl-D-alanine:undecaprenyl-phosphate transferase activity"/>
    <property type="evidence" value="ECO:0007669"/>
    <property type="project" value="RHEA"/>
</dbReference>
<dbReference type="GO" id="GO:0051301">
    <property type="term" value="P:cell division"/>
    <property type="evidence" value="ECO:0007669"/>
    <property type="project" value="UniProtKB-KW"/>
</dbReference>
<dbReference type="GO" id="GO:0071555">
    <property type="term" value="P:cell wall organization"/>
    <property type="evidence" value="ECO:0007669"/>
    <property type="project" value="UniProtKB-KW"/>
</dbReference>
<dbReference type="GO" id="GO:0009252">
    <property type="term" value="P:peptidoglycan biosynthetic process"/>
    <property type="evidence" value="ECO:0007669"/>
    <property type="project" value="UniProtKB-UniRule"/>
</dbReference>
<dbReference type="GO" id="GO:0008360">
    <property type="term" value="P:regulation of cell shape"/>
    <property type="evidence" value="ECO:0007669"/>
    <property type="project" value="UniProtKB-KW"/>
</dbReference>
<dbReference type="CDD" id="cd06852">
    <property type="entry name" value="GT_MraY"/>
    <property type="match status" value="1"/>
</dbReference>
<dbReference type="HAMAP" id="MF_00038">
    <property type="entry name" value="MraY"/>
    <property type="match status" value="1"/>
</dbReference>
<dbReference type="InterPro" id="IPR000715">
    <property type="entry name" value="Glycosyl_transferase_4"/>
</dbReference>
<dbReference type="InterPro" id="IPR003524">
    <property type="entry name" value="PNAcMuramoyl-5peptid_Trfase"/>
</dbReference>
<dbReference type="InterPro" id="IPR018480">
    <property type="entry name" value="PNAcMuramoyl-5peptid_Trfase_CS"/>
</dbReference>
<dbReference type="NCBIfam" id="TIGR00445">
    <property type="entry name" value="mraY"/>
    <property type="match status" value="1"/>
</dbReference>
<dbReference type="PANTHER" id="PTHR22926">
    <property type="entry name" value="PHOSPHO-N-ACETYLMURAMOYL-PENTAPEPTIDE-TRANSFERASE"/>
    <property type="match status" value="1"/>
</dbReference>
<dbReference type="PANTHER" id="PTHR22926:SF5">
    <property type="entry name" value="PHOSPHO-N-ACETYLMURAMOYL-PENTAPEPTIDE-TRANSFERASE HOMOLOG"/>
    <property type="match status" value="1"/>
</dbReference>
<dbReference type="Pfam" id="PF00953">
    <property type="entry name" value="Glycos_transf_4"/>
    <property type="match status" value="1"/>
</dbReference>
<dbReference type="Pfam" id="PF10555">
    <property type="entry name" value="MraY_sig1"/>
    <property type="match status" value="1"/>
</dbReference>
<dbReference type="PROSITE" id="PS01347">
    <property type="entry name" value="MRAY_1"/>
    <property type="match status" value="1"/>
</dbReference>
<dbReference type="PROSITE" id="PS01348">
    <property type="entry name" value="MRAY_2"/>
    <property type="match status" value="1"/>
</dbReference>
<comment type="function">
    <text evidence="1">Catalyzes the initial step of the lipid cycle reactions in the biosynthesis of the cell wall peptidoglycan: transfers peptidoglycan precursor phospho-MurNAc-pentapeptide from UDP-MurNAc-pentapeptide onto the lipid carrier undecaprenyl phosphate, yielding undecaprenyl-pyrophosphoryl-MurNAc-pentapeptide, known as lipid I.</text>
</comment>
<comment type="catalytic activity">
    <reaction evidence="1">
        <text>UDP-N-acetyl-alpha-D-muramoyl-L-alanyl-gamma-D-glutamyl-meso-2,6-diaminopimeloyl-D-alanyl-D-alanine + di-trans,octa-cis-undecaprenyl phosphate = di-trans,octa-cis-undecaprenyl diphospho-N-acetyl-alpha-D-muramoyl-L-alanyl-D-glutamyl-meso-2,6-diaminopimeloyl-D-alanyl-D-alanine + UMP</text>
        <dbReference type="Rhea" id="RHEA:28386"/>
        <dbReference type="ChEBI" id="CHEBI:57865"/>
        <dbReference type="ChEBI" id="CHEBI:60392"/>
        <dbReference type="ChEBI" id="CHEBI:61386"/>
        <dbReference type="ChEBI" id="CHEBI:61387"/>
        <dbReference type="EC" id="2.7.8.13"/>
    </reaction>
</comment>
<comment type="cofactor">
    <cofactor evidence="1">
        <name>Mg(2+)</name>
        <dbReference type="ChEBI" id="CHEBI:18420"/>
    </cofactor>
</comment>
<comment type="pathway">
    <text evidence="1">Cell wall biogenesis; peptidoglycan biosynthesis.</text>
</comment>
<comment type="subcellular location">
    <subcellularLocation>
        <location evidence="1">Cell inner membrane</location>
        <topology evidence="1">Multi-pass membrane protein</topology>
    </subcellularLocation>
</comment>
<comment type="similarity">
    <text evidence="1">Belongs to the glycosyltransferase 4 family. MraY subfamily.</text>
</comment>
<feature type="chain" id="PRO_1000002981" description="Phospho-N-acetylmuramoyl-pentapeptide-transferase">
    <location>
        <begin position="1"/>
        <end position="365"/>
    </location>
</feature>
<feature type="transmembrane region" description="Helical" evidence="1">
    <location>
        <begin position="22"/>
        <end position="42"/>
    </location>
</feature>
<feature type="transmembrane region" description="Helical" evidence="1">
    <location>
        <begin position="74"/>
        <end position="94"/>
    </location>
</feature>
<feature type="transmembrane region" description="Helical" evidence="1">
    <location>
        <begin position="95"/>
        <end position="115"/>
    </location>
</feature>
<feature type="transmembrane region" description="Helical" evidence="1">
    <location>
        <begin position="133"/>
        <end position="153"/>
    </location>
</feature>
<feature type="transmembrane region" description="Helical" evidence="1">
    <location>
        <begin position="168"/>
        <end position="188"/>
    </location>
</feature>
<feature type="transmembrane region" description="Helical" evidence="1">
    <location>
        <begin position="201"/>
        <end position="221"/>
    </location>
</feature>
<feature type="transmembrane region" description="Helical" evidence="1">
    <location>
        <begin position="240"/>
        <end position="260"/>
    </location>
</feature>
<feature type="transmembrane region" description="Helical" evidence="1">
    <location>
        <begin position="267"/>
        <end position="287"/>
    </location>
</feature>
<feature type="transmembrane region" description="Helical" evidence="1">
    <location>
        <begin position="292"/>
        <end position="312"/>
    </location>
</feature>
<feature type="transmembrane region" description="Helical" evidence="1">
    <location>
        <begin position="342"/>
        <end position="362"/>
    </location>
</feature>
<reference key="1">
    <citation type="journal article" date="2007" name="PLoS ONE">
        <title>Complete genomic characterization of a pathogenic A.II strain of Francisella tularensis subspecies tularensis.</title>
        <authorList>
            <person name="Beckstrom-Sternberg S.M."/>
            <person name="Auerbach R.K."/>
            <person name="Godbole S."/>
            <person name="Pearson J.V."/>
            <person name="Beckstrom-Sternberg J.S."/>
            <person name="Deng Z."/>
            <person name="Munk C."/>
            <person name="Kubota K."/>
            <person name="Zhou Y."/>
            <person name="Bruce D."/>
            <person name="Noronha J."/>
            <person name="Scheuermann R.H."/>
            <person name="Wang A."/>
            <person name="Wei X."/>
            <person name="Wang J."/>
            <person name="Hao J."/>
            <person name="Wagner D.M."/>
            <person name="Brettin T.S."/>
            <person name="Brown N."/>
            <person name="Gilna P."/>
            <person name="Keim P.S."/>
        </authorList>
    </citation>
    <scope>NUCLEOTIDE SEQUENCE [LARGE SCALE GENOMIC DNA]</scope>
    <source>
        <strain>WY96-3418</strain>
    </source>
</reference>
<sequence length="365" mass="40547">MLIYLFEWLSHYFKGLEVFSNYISVRIIMISITSLLITLALGRPMISWLQKMQIGQIVRDDGPQSHFSKRNTPTMGGVLILSSVIISCLLWGDLTSIYLWILILVVIFFGAIGFFDDYLKLVLKHPKGLRAKYKFALQSIFSIVLAIVLFYLLSKNGQMSLSIPFSKSLYIPMGIVIFVVLAFFIINGSSNAVNLTDGLDGLAIVPVVLVAAGLGIYAYIETNSTLANYLLFNYLGNPGLAEVAVFCAAVCGSGLAFLWFNSHPAEVFMGDVGSLTLGAVLGVIAVMVRQELIFFIMGLLFVVEALSVMLQVGSYKLRNGKRIFRMAPIHHHFELKGWPETKVVIRFWIISLILFLIGLAAIKVR</sequence>
<accession>A4IZH0</accession>
<gene>
    <name evidence="1" type="primary">mraY</name>
    <name type="ordered locus">FTW_1620</name>
</gene>
<keyword id="KW-0131">Cell cycle</keyword>
<keyword id="KW-0132">Cell division</keyword>
<keyword id="KW-0997">Cell inner membrane</keyword>
<keyword id="KW-1003">Cell membrane</keyword>
<keyword id="KW-0133">Cell shape</keyword>
<keyword id="KW-0961">Cell wall biogenesis/degradation</keyword>
<keyword id="KW-0460">Magnesium</keyword>
<keyword id="KW-0472">Membrane</keyword>
<keyword id="KW-0479">Metal-binding</keyword>
<keyword id="KW-0573">Peptidoglycan synthesis</keyword>
<keyword id="KW-0808">Transferase</keyword>
<keyword id="KW-0812">Transmembrane</keyword>
<keyword id="KW-1133">Transmembrane helix</keyword>
<organism>
    <name type="scientific">Francisella tularensis subsp. tularensis (strain WY96-3418)</name>
    <dbReference type="NCBI Taxonomy" id="418136"/>
    <lineage>
        <taxon>Bacteria</taxon>
        <taxon>Pseudomonadati</taxon>
        <taxon>Pseudomonadota</taxon>
        <taxon>Gammaproteobacteria</taxon>
        <taxon>Thiotrichales</taxon>
        <taxon>Francisellaceae</taxon>
        <taxon>Francisella</taxon>
    </lineage>
</organism>